<keyword id="KW-0028">Amino-acid biosynthesis</keyword>
<keyword id="KW-0963">Cytoplasm</keyword>
<keyword id="KW-0554">One-carbon metabolism</keyword>
<keyword id="KW-0663">Pyridoxal phosphate</keyword>
<keyword id="KW-0808">Transferase</keyword>
<reference key="1">
    <citation type="journal article" date="2010" name="PLoS Genet.">
        <title>Genome sequence of the plant growth promoting endophytic bacterium Enterobacter sp. 638.</title>
        <authorList>
            <person name="Taghavi S."/>
            <person name="van der Lelie D."/>
            <person name="Hoffman A."/>
            <person name="Zhang Y.B."/>
            <person name="Walla M.D."/>
            <person name="Vangronsveld J."/>
            <person name="Newman L."/>
            <person name="Monchy S."/>
        </authorList>
    </citation>
    <scope>NUCLEOTIDE SEQUENCE [LARGE SCALE GENOMIC DNA]</scope>
    <source>
        <strain>638</strain>
    </source>
</reference>
<evidence type="ECO:0000255" key="1">
    <source>
        <dbReference type="HAMAP-Rule" id="MF_00051"/>
    </source>
</evidence>
<feature type="chain" id="PRO_1000057367" description="Serine hydroxymethyltransferase">
    <location>
        <begin position="1"/>
        <end position="417"/>
    </location>
</feature>
<feature type="binding site" evidence="1">
    <location>
        <position position="121"/>
    </location>
    <ligand>
        <name>(6S)-5,6,7,8-tetrahydrofolate</name>
        <dbReference type="ChEBI" id="CHEBI:57453"/>
    </ligand>
</feature>
<feature type="binding site" evidence="1">
    <location>
        <begin position="125"/>
        <end position="127"/>
    </location>
    <ligand>
        <name>(6S)-5,6,7,8-tetrahydrofolate</name>
        <dbReference type="ChEBI" id="CHEBI:57453"/>
    </ligand>
</feature>
<feature type="binding site" evidence="1">
    <location>
        <begin position="355"/>
        <end position="357"/>
    </location>
    <ligand>
        <name>(6S)-5,6,7,8-tetrahydrofolate</name>
        <dbReference type="ChEBI" id="CHEBI:57453"/>
    </ligand>
</feature>
<feature type="site" description="Plays an important role in substrate specificity" evidence="1">
    <location>
        <position position="228"/>
    </location>
</feature>
<feature type="modified residue" description="N6-(pyridoxal phosphate)lysine" evidence="1">
    <location>
        <position position="229"/>
    </location>
</feature>
<protein>
    <recommendedName>
        <fullName evidence="1">Serine hydroxymethyltransferase</fullName>
        <shortName evidence="1">SHMT</shortName>
        <shortName evidence="1">Serine methylase</shortName>
        <ecNumber evidence="1">2.1.2.1</ecNumber>
    </recommendedName>
</protein>
<dbReference type="EC" id="2.1.2.1" evidence="1"/>
<dbReference type="EMBL" id="CP000653">
    <property type="protein sequence ID" value="ABP61700.1"/>
    <property type="molecule type" value="Genomic_DNA"/>
</dbReference>
<dbReference type="RefSeq" id="WP_015960031.1">
    <property type="nucleotide sequence ID" value="NC_009436.1"/>
</dbReference>
<dbReference type="SMR" id="A4WDC0"/>
<dbReference type="STRING" id="399742.Ent638_3036"/>
<dbReference type="KEGG" id="ent:Ent638_3036"/>
<dbReference type="eggNOG" id="COG0112">
    <property type="taxonomic scope" value="Bacteria"/>
</dbReference>
<dbReference type="HOGENOM" id="CLU_022477_2_1_6"/>
<dbReference type="OrthoDB" id="9803846at2"/>
<dbReference type="UniPathway" id="UPA00193"/>
<dbReference type="UniPathway" id="UPA00288">
    <property type="reaction ID" value="UER01023"/>
</dbReference>
<dbReference type="Proteomes" id="UP000000230">
    <property type="component" value="Chromosome"/>
</dbReference>
<dbReference type="GO" id="GO:0005829">
    <property type="term" value="C:cytosol"/>
    <property type="evidence" value="ECO:0007669"/>
    <property type="project" value="TreeGrafter"/>
</dbReference>
<dbReference type="GO" id="GO:0004372">
    <property type="term" value="F:glycine hydroxymethyltransferase activity"/>
    <property type="evidence" value="ECO:0007669"/>
    <property type="project" value="UniProtKB-UniRule"/>
</dbReference>
<dbReference type="GO" id="GO:0030170">
    <property type="term" value="F:pyridoxal phosphate binding"/>
    <property type="evidence" value="ECO:0007669"/>
    <property type="project" value="UniProtKB-UniRule"/>
</dbReference>
<dbReference type="GO" id="GO:0019264">
    <property type="term" value="P:glycine biosynthetic process from serine"/>
    <property type="evidence" value="ECO:0007669"/>
    <property type="project" value="UniProtKB-UniRule"/>
</dbReference>
<dbReference type="GO" id="GO:0035999">
    <property type="term" value="P:tetrahydrofolate interconversion"/>
    <property type="evidence" value="ECO:0007669"/>
    <property type="project" value="UniProtKB-UniRule"/>
</dbReference>
<dbReference type="CDD" id="cd00378">
    <property type="entry name" value="SHMT"/>
    <property type="match status" value="1"/>
</dbReference>
<dbReference type="FunFam" id="3.40.640.10:FF:000001">
    <property type="entry name" value="Serine hydroxymethyltransferase"/>
    <property type="match status" value="1"/>
</dbReference>
<dbReference type="FunFam" id="3.90.1150.10:FF:000003">
    <property type="entry name" value="Serine hydroxymethyltransferase"/>
    <property type="match status" value="1"/>
</dbReference>
<dbReference type="Gene3D" id="3.90.1150.10">
    <property type="entry name" value="Aspartate Aminotransferase, domain 1"/>
    <property type="match status" value="1"/>
</dbReference>
<dbReference type="Gene3D" id="3.40.640.10">
    <property type="entry name" value="Type I PLP-dependent aspartate aminotransferase-like (Major domain)"/>
    <property type="match status" value="1"/>
</dbReference>
<dbReference type="HAMAP" id="MF_00051">
    <property type="entry name" value="SHMT"/>
    <property type="match status" value="1"/>
</dbReference>
<dbReference type="InterPro" id="IPR015424">
    <property type="entry name" value="PyrdxlP-dep_Trfase"/>
</dbReference>
<dbReference type="InterPro" id="IPR015421">
    <property type="entry name" value="PyrdxlP-dep_Trfase_major"/>
</dbReference>
<dbReference type="InterPro" id="IPR015422">
    <property type="entry name" value="PyrdxlP-dep_Trfase_small"/>
</dbReference>
<dbReference type="InterPro" id="IPR001085">
    <property type="entry name" value="Ser_HO-MeTrfase"/>
</dbReference>
<dbReference type="InterPro" id="IPR049943">
    <property type="entry name" value="Ser_HO-MeTrfase-like"/>
</dbReference>
<dbReference type="InterPro" id="IPR019798">
    <property type="entry name" value="Ser_HO-MeTrfase_PLP_BS"/>
</dbReference>
<dbReference type="InterPro" id="IPR039429">
    <property type="entry name" value="SHMT-like_dom"/>
</dbReference>
<dbReference type="NCBIfam" id="NF000586">
    <property type="entry name" value="PRK00011.1"/>
    <property type="match status" value="1"/>
</dbReference>
<dbReference type="PANTHER" id="PTHR11680">
    <property type="entry name" value="SERINE HYDROXYMETHYLTRANSFERASE"/>
    <property type="match status" value="1"/>
</dbReference>
<dbReference type="PANTHER" id="PTHR11680:SF50">
    <property type="entry name" value="SERINE HYDROXYMETHYLTRANSFERASE"/>
    <property type="match status" value="1"/>
</dbReference>
<dbReference type="Pfam" id="PF00464">
    <property type="entry name" value="SHMT"/>
    <property type="match status" value="1"/>
</dbReference>
<dbReference type="PIRSF" id="PIRSF000412">
    <property type="entry name" value="SHMT"/>
    <property type="match status" value="1"/>
</dbReference>
<dbReference type="SUPFAM" id="SSF53383">
    <property type="entry name" value="PLP-dependent transferases"/>
    <property type="match status" value="1"/>
</dbReference>
<dbReference type="PROSITE" id="PS00096">
    <property type="entry name" value="SHMT"/>
    <property type="match status" value="1"/>
</dbReference>
<organism>
    <name type="scientific">Enterobacter sp. (strain 638)</name>
    <dbReference type="NCBI Taxonomy" id="399742"/>
    <lineage>
        <taxon>Bacteria</taxon>
        <taxon>Pseudomonadati</taxon>
        <taxon>Pseudomonadota</taxon>
        <taxon>Gammaproteobacteria</taxon>
        <taxon>Enterobacterales</taxon>
        <taxon>Enterobacteriaceae</taxon>
        <taxon>Enterobacter</taxon>
    </lineage>
</organism>
<proteinExistence type="inferred from homology"/>
<comment type="function">
    <text evidence="1">Catalyzes the reversible interconversion of serine and glycine with tetrahydrofolate (THF) serving as the one-carbon carrier. This reaction serves as the major source of one-carbon groups required for the biosynthesis of purines, thymidylate, methionine, and other important biomolecules. Also exhibits THF-independent aldolase activity toward beta-hydroxyamino acids, producing glycine and aldehydes, via a retro-aldol mechanism.</text>
</comment>
<comment type="catalytic activity">
    <reaction evidence="1">
        <text>(6R)-5,10-methylene-5,6,7,8-tetrahydrofolate + glycine + H2O = (6S)-5,6,7,8-tetrahydrofolate + L-serine</text>
        <dbReference type="Rhea" id="RHEA:15481"/>
        <dbReference type="ChEBI" id="CHEBI:15377"/>
        <dbReference type="ChEBI" id="CHEBI:15636"/>
        <dbReference type="ChEBI" id="CHEBI:33384"/>
        <dbReference type="ChEBI" id="CHEBI:57305"/>
        <dbReference type="ChEBI" id="CHEBI:57453"/>
        <dbReference type="EC" id="2.1.2.1"/>
    </reaction>
</comment>
<comment type="cofactor">
    <cofactor evidence="1">
        <name>pyridoxal 5'-phosphate</name>
        <dbReference type="ChEBI" id="CHEBI:597326"/>
    </cofactor>
</comment>
<comment type="pathway">
    <text evidence="1">One-carbon metabolism; tetrahydrofolate interconversion.</text>
</comment>
<comment type="pathway">
    <text evidence="1">Amino-acid biosynthesis; glycine biosynthesis; glycine from L-serine: step 1/1.</text>
</comment>
<comment type="subunit">
    <text evidence="1">Homodimer.</text>
</comment>
<comment type="subcellular location">
    <subcellularLocation>
        <location evidence="1">Cytoplasm</location>
    </subcellularLocation>
</comment>
<comment type="similarity">
    <text evidence="1">Belongs to the SHMT family.</text>
</comment>
<gene>
    <name evidence="1" type="primary">glyA</name>
    <name type="ordered locus">Ent638_3036</name>
</gene>
<name>GLYA_ENT38</name>
<accession>A4WDC0</accession>
<sequence length="417" mass="45491">MLKREMNIADYDAELWQAMEQEKVRQEEHIELIASENYTSPRVMQAQGSQLTNKYAEGYPGKRYYGGCEYVDIVEQLAIDRAKELFGADYANVQPHSGSQANFAVYTALLQPGDTVLGMNLAQGGHLTHGSPVNFSGKLYNIIPYGIDESGKIDYEDMAKQAETHKPKMIIGGFSAYSGVVDWAKMREIADSIGAYLFVDMAHVAGLIAAGVYPNPVPHAHVVTTTTHKTLAGPRGGLILAHGGNEELYKKLNSAVFPSAQGGPLMHVIAAKAVALKEAMEPEFKVYQQQVAKNAKAMVEVFLNRGYKVVSGGTENHLFLLDLVDKNLTGKEADAALGRANITVNKNSVPNDPKSPFVTSGIRIGSPAVTRRGFKEAEVKELAGWMCDVLDNINDEAVIERIKGKVLDICARFPVYA</sequence>